<comment type="function">
    <text evidence="6">When overexpressed, acts as a general inhibitor of transcription that eventually leads to apoptosis.</text>
</comment>
<comment type="subcellular location">
    <subcellularLocation>
        <location evidence="6">Nucleus</location>
    </subcellularLocation>
    <text>Detected in punctate structures.</text>
</comment>
<comment type="alternative products">
    <event type="alternative splicing"/>
    <isoform>
        <id>Q8CH25-1</id>
        <name>1</name>
        <sequence type="displayed"/>
    </isoform>
    <isoform>
        <id>Q8CH25-2</id>
        <name>2</name>
        <sequence type="described" ref="VSP_028834"/>
    </isoform>
</comment>
<comment type="sequence caution" evidence="8">
    <conflict type="erroneous initiation">
        <sequence resource="EMBL-CDS" id="AAH19992"/>
    </conflict>
</comment>
<comment type="sequence caution" evidence="8">
    <conflict type="erroneous initiation">
        <sequence resource="EMBL-CDS" id="BAC32471"/>
    </conflict>
</comment>
<comment type="sequence caution" evidence="8">
    <conflict type="erroneous initiation">
        <sequence resource="EMBL-CDS" id="BAE22267"/>
    </conflict>
</comment>
<keyword id="KW-0007">Acetylation</keyword>
<keyword id="KW-0025">Alternative splicing</keyword>
<keyword id="KW-0053">Apoptosis</keyword>
<keyword id="KW-0175">Coiled coil</keyword>
<keyword id="KW-1017">Isopeptide bond</keyword>
<keyword id="KW-0488">Methylation</keyword>
<keyword id="KW-0539">Nucleus</keyword>
<keyword id="KW-0597">Phosphoprotein</keyword>
<keyword id="KW-1185">Reference proteome</keyword>
<keyword id="KW-0678">Repressor</keyword>
<keyword id="KW-0694">RNA-binding</keyword>
<keyword id="KW-0804">Transcription</keyword>
<keyword id="KW-0805">Transcription regulation</keyword>
<keyword id="KW-0832">Ubl conjugation</keyword>
<proteinExistence type="evidence at protein level"/>
<accession>Q8CH25</accession>
<accession>Q3UYE5</accession>
<accession>Q8BP76</accession>
<accession>Q8BR40</accession>
<accession>Q8VCF4</accession>
<accession>Q9CS57</accession>
<protein>
    <recommendedName>
        <fullName>SAFB-like transcription modulator</fullName>
    </recommendedName>
    <alternativeName>
        <fullName>Modulator of estrogen-induced transcription</fullName>
    </alternativeName>
    <alternativeName>
        <fullName>SAF-like transcription modulator</fullName>
    </alternativeName>
</protein>
<feature type="initiator methionine" description="Removed" evidence="1">
    <location>
        <position position="1"/>
    </location>
</feature>
<feature type="chain" id="PRO_0000307799" description="SAFB-like transcription modulator">
    <location>
        <begin position="2"/>
        <end position="1031"/>
    </location>
</feature>
<feature type="domain" description="SAP" evidence="4">
    <location>
        <begin position="22"/>
        <end position="56"/>
    </location>
</feature>
<feature type="domain" description="RRM" evidence="3">
    <location>
        <begin position="384"/>
        <end position="462"/>
    </location>
</feature>
<feature type="region of interest" description="Disordered" evidence="5">
    <location>
        <begin position="1"/>
        <end position="22"/>
    </location>
</feature>
<feature type="region of interest" description="Disordered" evidence="5">
    <location>
        <begin position="57"/>
        <end position="245"/>
    </location>
</feature>
<feature type="region of interest" description="Disordered" evidence="5">
    <location>
        <begin position="269"/>
        <end position="387"/>
    </location>
</feature>
<feature type="region of interest" description="Disordered" evidence="5">
    <location>
        <begin position="455"/>
        <end position="598"/>
    </location>
</feature>
<feature type="region of interest" description="Disordered" evidence="5">
    <location>
        <begin position="712"/>
        <end position="739"/>
    </location>
</feature>
<feature type="region of interest" description="Disordered" evidence="5">
    <location>
        <begin position="778"/>
        <end position="1031"/>
    </location>
</feature>
<feature type="coiled-coil region" evidence="2">
    <location>
        <begin position="107"/>
        <end position="182"/>
    </location>
</feature>
<feature type="coiled-coil region" evidence="2">
    <location>
        <begin position="608"/>
        <end position="727"/>
    </location>
</feature>
<feature type="compositionally biased region" description="Low complexity" evidence="5">
    <location>
        <begin position="1"/>
        <end position="15"/>
    </location>
</feature>
<feature type="compositionally biased region" description="Acidic residues" evidence="5">
    <location>
        <begin position="90"/>
        <end position="101"/>
    </location>
</feature>
<feature type="compositionally biased region" description="Basic and acidic residues" evidence="5">
    <location>
        <begin position="102"/>
        <end position="127"/>
    </location>
</feature>
<feature type="compositionally biased region" description="Acidic residues" evidence="5">
    <location>
        <begin position="169"/>
        <end position="195"/>
    </location>
</feature>
<feature type="compositionally biased region" description="Basic and acidic residues" evidence="5">
    <location>
        <begin position="220"/>
        <end position="229"/>
    </location>
</feature>
<feature type="compositionally biased region" description="Basic and acidic residues" evidence="5">
    <location>
        <begin position="270"/>
        <end position="283"/>
    </location>
</feature>
<feature type="compositionally biased region" description="Basic and acidic residues" evidence="5">
    <location>
        <begin position="290"/>
        <end position="339"/>
    </location>
</feature>
<feature type="compositionally biased region" description="Polar residues" evidence="5">
    <location>
        <begin position="342"/>
        <end position="351"/>
    </location>
</feature>
<feature type="compositionally biased region" description="Basic and acidic residues" evidence="5">
    <location>
        <begin position="354"/>
        <end position="370"/>
    </location>
</feature>
<feature type="compositionally biased region" description="Basic and acidic residues" evidence="5">
    <location>
        <begin position="458"/>
        <end position="529"/>
    </location>
</feature>
<feature type="compositionally biased region" description="Basic and acidic residues" evidence="5">
    <location>
        <begin position="538"/>
        <end position="547"/>
    </location>
</feature>
<feature type="compositionally biased region" description="Basic and acidic residues" evidence="5">
    <location>
        <begin position="563"/>
        <end position="598"/>
    </location>
</feature>
<feature type="compositionally biased region" description="Basic and acidic residues" evidence="5">
    <location>
        <begin position="717"/>
        <end position="739"/>
    </location>
</feature>
<feature type="compositionally biased region" description="Basic and acidic residues" evidence="5">
    <location>
        <begin position="787"/>
        <end position="869"/>
    </location>
</feature>
<feature type="compositionally biased region" description="Polar residues" evidence="5">
    <location>
        <begin position="872"/>
        <end position="887"/>
    </location>
</feature>
<feature type="compositionally biased region" description="Basic and acidic residues" evidence="5">
    <location>
        <begin position="888"/>
        <end position="906"/>
    </location>
</feature>
<feature type="compositionally biased region" description="Basic and acidic residues" evidence="5">
    <location>
        <begin position="944"/>
        <end position="966"/>
    </location>
</feature>
<feature type="compositionally biased region" description="Polar residues" evidence="5">
    <location>
        <begin position="992"/>
        <end position="1014"/>
    </location>
</feature>
<feature type="compositionally biased region" description="Low complexity" evidence="5">
    <location>
        <begin position="1015"/>
        <end position="1031"/>
    </location>
</feature>
<feature type="modified residue" description="N-acetylalanine" evidence="1">
    <location>
        <position position="2"/>
    </location>
</feature>
<feature type="modified residue" description="Phosphoserine" evidence="1">
    <location>
        <position position="93"/>
    </location>
</feature>
<feature type="modified residue" description="Phosphoserine" evidence="1">
    <location>
        <position position="97"/>
    </location>
</feature>
<feature type="modified residue" description="Phosphoserine" evidence="10">
    <location>
        <position position="139"/>
    </location>
</feature>
<feature type="modified residue" description="Phosphoserine" evidence="1">
    <location>
        <position position="144"/>
    </location>
</feature>
<feature type="modified residue" description="Phosphoserine" evidence="9 12 13">
    <location>
        <position position="289"/>
    </location>
</feature>
<feature type="modified residue" description="N6-acetyllysine" evidence="1">
    <location>
        <position position="401"/>
    </location>
</feature>
<feature type="modified residue" description="Phosphoserine" evidence="1">
    <location>
        <position position="421"/>
    </location>
</feature>
<feature type="modified residue" description="Phosphoserine" evidence="13">
    <location>
        <position position="549"/>
    </location>
</feature>
<feature type="modified residue" description="Phosphoserine" evidence="13">
    <location>
        <position position="550"/>
    </location>
</feature>
<feature type="modified residue" description="Phosphoserine" evidence="9 12 13">
    <location>
        <position position="552"/>
    </location>
</feature>
<feature type="modified residue" description="Phosphoserine" evidence="1">
    <location>
        <position position="747"/>
    </location>
</feature>
<feature type="modified residue" description="Phosphoserine" evidence="1">
    <location>
        <position position="786"/>
    </location>
</feature>
<feature type="modified residue" description="Phosphoserine" evidence="1">
    <location>
        <position position="797"/>
    </location>
</feature>
<feature type="modified residue" description="Phosphoserine" evidence="1">
    <location>
        <position position="812"/>
    </location>
</feature>
<feature type="modified residue" description="Phosphoserine" evidence="1">
    <location>
        <position position="906"/>
    </location>
</feature>
<feature type="modified residue" description="Phosphoserine" evidence="1">
    <location>
        <position position="920"/>
    </location>
</feature>
<feature type="modified residue" description="Phosphoserine" evidence="1">
    <location>
        <position position="995"/>
    </location>
</feature>
<feature type="modified residue" description="Phosphoserine" evidence="11 13">
    <location>
        <position position="999"/>
    </location>
</feature>
<feature type="modified residue" description="Phosphoserine" evidence="1">
    <location>
        <position position="1011"/>
    </location>
</feature>
<feature type="modified residue" description="Omega-N-methylarginine" evidence="14">
    <location>
        <position position="1014"/>
    </location>
</feature>
<feature type="modified residue" description="Phosphoserine" evidence="1">
    <location>
        <position position="1016"/>
    </location>
</feature>
<feature type="modified residue" description="Phosphoserine" evidence="1">
    <location>
        <position position="1018"/>
    </location>
</feature>
<feature type="modified residue" description="N6-acetyllysine; alternate" evidence="1">
    <location>
        <position position="1021"/>
    </location>
</feature>
<feature type="cross-link" description="Glycyl lysine isopeptide (Lys-Gly) (interchain with G-Cter in SUMO2)" evidence="1">
    <location>
        <position position="500"/>
    </location>
</feature>
<feature type="cross-link" description="Glycyl lysine isopeptide (Lys-Gly) (interchain with G-Cter in SUMO2)" evidence="1">
    <location>
        <position position="881"/>
    </location>
</feature>
<feature type="cross-link" description="Glycyl lysine isopeptide (Lys-Gly) (interchain with G-Cter in SUMO2); alternate" evidence="1">
    <location>
        <position position="1021"/>
    </location>
</feature>
<feature type="cross-link" description="Glycyl lysine isopeptide (Lys-Gly) (interchain with G-Cter in SUMO2)" evidence="1">
    <location>
        <position position="1024"/>
    </location>
</feature>
<feature type="splice variant" id="VSP_028834" description="In isoform 2." evidence="7">
    <location>
        <begin position="197"/>
        <end position="214"/>
    </location>
</feature>
<feature type="sequence conflict" description="In Ref. 2; BAB30967." evidence="8" ref="2">
    <original>A</original>
    <variation>R</variation>
    <location>
        <position position="4"/>
    </location>
</feature>
<feature type="sequence conflict" description="In Ref. 2; BAE22267." evidence="8" ref="2">
    <original>R</original>
    <variation>Q</variation>
    <location>
        <position position="985"/>
    </location>
</feature>
<reference key="1">
    <citation type="journal article" date="2007" name="Biochem. J.">
        <title>A novel member of the SAF (scaffold attachment factor)-box protein family inhibits gene expression and induces apoptosis.</title>
        <authorList>
            <person name="Chan C.W."/>
            <person name="Lee Y.-B."/>
            <person name="Uney J."/>
            <person name="Flynn A."/>
            <person name="Tobias J.H."/>
            <person name="Norman M."/>
        </authorList>
    </citation>
    <scope>NUCLEOTIDE SEQUENCE [MRNA] (ISOFORM 1)</scope>
    <scope>FUNCTION</scope>
    <scope>SUBCELLULAR LOCATION</scope>
</reference>
<reference key="2">
    <citation type="journal article" date="2005" name="Science">
        <title>The transcriptional landscape of the mammalian genome.</title>
        <authorList>
            <person name="Carninci P."/>
            <person name="Kasukawa T."/>
            <person name="Katayama S."/>
            <person name="Gough J."/>
            <person name="Frith M.C."/>
            <person name="Maeda N."/>
            <person name="Oyama R."/>
            <person name="Ravasi T."/>
            <person name="Lenhard B."/>
            <person name="Wells C."/>
            <person name="Kodzius R."/>
            <person name="Shimokawa K."/>
            <person name="Bajic V.B."/>
            <person name="Brenner S.E."/>
            <person name="Batalov S."/>
            <person name="Forrest A.R."/>
            <person name="Zavolan M."/>
            <person name="Davis M.J."/>
            <person name="Wilming L.G."/>
            <person name="Aidinis V."/>
            <person name="Allen J.E."/>
            <person name="Ambesi-Impiombato A."/>
            <person name="Apweiler R."/>
            <person name="Aturaliya R.N."/>
            <person name="Bailey T.L."/>
            <person name="Bansal M."/>
            <person name="Baxter L."/>
            <person name="Beisel K.W."/>
            <person name="Bersano T."/>
            <person name="Bono H."/>
            <person name="Chalk A.M."/>
            <person name="Chiu K.P."/>
            <person name="Choudhary V."/>
            <person name="Christoffels A."/>
            <person name="Clutterbuck D.R."/>
            <person name="Crowe M.L."/>
            <person name="Dalla E."/>
            <person name="Dalrymple B.P."/>
            <person name="de Bono B."/>
            <person name="Della Gatta G."/>
            <person name="di Bernardo D."/>
            <person name="Down T."/>
            <person name="Engstrom P."/>
            <person name="Fagiolini M."/>
            <person name="Faulkner G."/>
            <person name="Fletcher C.F."/>
            <person name="Fukushima T."/>
            <person name="Furuno M."/>
            <person name="Futaki S."/>
            <person name="Gariboldi M."/>
            <person name="Georgii-Hemming P."/>
            <person name="Gingeras T.R."/>
            <person name="Gojobori T."/>
            <person name="Green R.E."/>
            <person name="Gustincich S."/>
            <person name="Harbers M."/>
            <person name="Hayashi Y."/>
            <person name="Hensch T.K."/>
            <person name="Hirokawa N."/>
            <person name="Hill D."/>
            <person name="Huminiecki L."/>
            <person name="Iacono M."/>
            <person name="Ikeo K."/>
            <person name="Iwama A."/>
            <person name="Ishikawa T."/>
            <person name="Jakt M."/>
            <person name="Kanapin A."/>
            <person name="Katoh M."/>
            <person name="Kawasawa Y."/>
            <person name="Kelso J."/>
            <person name="Kitamura H."/>
            <person name="Kitano H."/>
            <person name="Kollias G."/>
            <person name="Krishnan S.P."/>
            <person name="Kruger A."/>
            <person name="Kummerfeld S.K."/>
            <person name="Kurochkin I.V."/>
            <person name="Lareau L.F."/>
            <person name="Lazarevic D."/>
            <person name="Lipovich L."/>
            <person name="Liu J."/>
            <person name="Liuni S."/>
            <person name="McWilliam S."/>
            <person name="Madan Babu M."/>
            <person name="Madera M."/>
            <person name="Marchionni L."/>
            <person name="Matsuda H."/>
            <person name="Matsuzawa S."/>
            <person name="Miki H."/>
            <person name="Mignone F."/>
            <person name="Miyake S."/>
            <person name="Morris K."/>
            <person name="Mottagui-Tabar S."/>
            <person name="Mulder N."/>
            <person name="Nakano N."/>
            <person name="Nakauchi H."/>
            <person name="Ng P."/>
            <person name="Nilsson R."/>
            <person name="Nishiguchi S."/>
            <person name="Nishikawa S."/>
            <person name="Nori F."/>
            <person name="Ohara O."/>
            <person name="Okazaki Y."/>
            <person name="Orlando V."/>
            <person name="Pang K.C."/>
            <person name="Pavan W.J."/>
            <person name="Pavesi G."/>
            <person name="Pesole G."/>
            <person name="Petrovsky N."/>
            <person name="Piazza S."/>
            <person name="Reed J."/>
            <person name="Reid J.F."/>
            <person name="Ring B.Z."/>
            <person name="Ringwald M."/>
            <person name="Rost B."/>
            <person name="Ruan Y."/>
            <person name="Salzberg S.L."/>
            <person name="Sandelin A."/>
            <person name="Schneider C."/>
            <person name="Schoenbach C."/>
            <person name="Sekiguchi K."/>
            <person name="Semple C.A."/>
            <person name="Seno S."/>
            <person name="Sessa L."/>
            <person name="Sheng Y."/>
            <person name="Shibata Y."/>
            <person name="Shimada H."/>
            <person name="Shimada K."/>
            <person name="Silva D."/>
            <person name="Sinclair B."/>
            <person name="Sperling S."/>
            <person name="Stupka E."/>
            <person name="Sugiura K."/>
            <person name="Sultana R."/>
            <person name="Takenaka Y."/>
            <person name="Taki K."/>
            <person name="Tammoja K."/>
            <person name="Tan S.L."/>
            <person name="Tang S."/>
            <person name="Taylor M.S."/>
            <person name="Tegner J."/>
            <person name="Teichmann S.A."/>
            <person name="Ueda H.R."/>
            <person name="van Nimwegen E."/>
            <person name="Verardo R."/>
            <person name="Wei C.L."/>
            <person name="Yagi K."/>
            <person name="Yamanishi H."/>
            <person name="Zabarovsky E."/>
            <person name="Zhu S."/>
            <person name="Zimmer A."/>
            <person name="Hide W."/>
            <person name="Bult C."/>
            <person name="Grimmond S.M."/>
            <person name="Teasdale R.D."/>
            <person name="Liu E.T."/>
            <person name="Brusic V."/>
            <person name="Quackenbush J."/>
            <person name="Wahlestedt C."/>
            <person name="Mattick J.S."/>
            <person name="Hume D.A."/>
            <person name="Kai C."/>
            <person name="Sasaki D."/>
            <person name="Tomaru Y."/>
            <person name="Fukuda S."/>
            <person name="Kanamori-Katayama M."/>
            <person name="Suzuki M."/>
            <person name="Aoki J."/>
            <person name="Arakawa T."/>
            <person name="Iida J."/>
            <person name="Imamura K."/>
            <person name="Itoh M."/>
            <person name="Kato T."/>
            <person name="Kawaji H."/>
            <person name="Kawagashira N."/>
            <person name="Kawashima T."/>
            <person name="Kojima M."/>
            <person name="Kondo S."/>
            <person name="Konno H."/>
            <person name="Nakano K."/>
            <person name="Ninomiya N."/>
            <person name="Nishio T."/>
            <person name="Okada M."/>
            <person name="Plessy C."/>
            <person name="Shibata K."/>
            <person name="Shiraki T."/>
            <person name="Suzuki S."/>
            <person name="Tagami M."/>
            <person name="Waki K."/>
            <person name="Watahiki A."/>
            <person name="Okamura-Oho Y."/>
            <person name="Suzuki H."/>
            <person name="Kawai J."/>
            <person name="Hayashizaki Y."/>
        </authorList>
    </citation>
    <scope>NUCLEOTIDE SEQUENCE [LARGE SCALE MRNA] OF 1-582 (ISOFORM 2)</scope>
    <scope>NUCLEOTIDE SEQUENCE [LARGE SCALE MRNA] OF 425-1031 (ISOFORM 1/2)</scope>
    <source>
        <strain>C57BL/6J</strain>
        <tissue>Corpora quadrigemina</tissue>
        <tissue>Embryo</tissue>
        <tissue>Medulla oblongata</tissue>
    </source>
</reference>
<reference key="3">
    <citation type="journal article" date="2004" name="Genome Res.">
        <title>The status, quality, and expansion of the NIH full-length cDNA project: the Mammalian Gene Collection (MGC).</title>
        <authorList>
            <consortium name="The MGC Project Team"/>
        </authorList>
    </citation>
    <scope>NUCLEOTIDE SEQUENCE [LARGE SCALE MRNA] OF 528-1031 (ISOFORM 1/2)</scope>
    <source>
        <strain>FVB/N</strain>
        <tissue>Colon</tissue>
    </source>
</reference>
<reference key="4">
    <citation type="journal article" date="2007" name="Proc. Natl. Acad. Sci. U.S.A.">
        <title>Large-scale phosphorylation analysis of mouse liver.</title>
        <authorList>
            <person name="Villen J."/>
            <person name="Beausoleil S.A."/>
            <person name="Gerber S.A."/>
            <person name="Gygi S.P."/>
        </authorList>
    </citation>
    <scope>PHOSPHORYLATION [LARGE SCALE ANALYSIS] AT SER-289 AND SER-552</scope>
    <scope>IDENTIFICATION BY MASS SPECTROMETRY [LARGE SCALE ANALYSIS]</scope>
    <source>
        <tissue>Liver</tissue>
    </source>
</reference>
<reference key="5">
    <citation type="journal article" date="2007" name="Science">
        <title>ATM and ATR substrate analysis reveals extensive protein networks responsive to DNA damage.</title>
        <authorList>
            <person name="Matsuoka S."/>
            <person name="Ballif B.A."/>
            <person name="Smogorzewska A."/>
            <person name="McDonald E.R. III"/>
            <person name="Hurov K.E."/>
            <person name="Luo J."/>
            <person name="Bakalarski C.E."/>
            <person name="Zhao Z."/>
            <person name="Solimini N."/>
            <person name="Lerenthal Y."/>
            <person name="Shiloh Y."/>
            <person name="Gygi S.P."/>
            <person name="Elledge S.J."/>
        </authorList>
    </citation>
    <scope>PHOSPHORYLATION [LARGE SCALE ANALYSIS] AT SER-139</scope>
    <scope>IDENTIFICATION BY MASS SPECTROMETRY [LARGE SCALE ANALYSIS]</scope>
    <source>
        <tissue>Embryonic fibroblast</tissue>
    </source>
</reference>
<reference key="6">
    <citation type="journal article" date="2008" name="J. Proteome Res.">
        <title>Specific phosphopeptide enrichment with immobilized titanium ion affinity chromatography adsorbent for phosphoproteome analysis.</title>
        <authorList>
            <person name="Zhou H."/>
            <person name="Ye M."/>
            <person name="Dong J."/>
            <person name="Han G."/>
            <person name="Jiang X."/>
            <person name="Wu R."/>
            <person name="Zou H."/>
        </authorList>
    </citation>
    <scope>IDENTIFICATION BY MASS SPECTROMETRY [LARGE SCALE ANALYSIS]</scope>
    <source>
        <tissue>Liver</tissue>
    </source>
</reference>
<reference key="7">
    <citation type="journal article" date="2009" name="Immunity">
        <title>The phagosomal proteome in interferon-gamma-activated macrophages.</title>
        <authorList>
            <person name="Trost M."/>
            <person name="English L."/>
            <person name="Lemieux S."/>
            <person name="Courcelles M."/>
            <person name="Desjardins M."/>
            <person name="Thibault P."/>
        </authorList>
    </citation>
    <scope>PHOSPHORYLATION [LARGE SCALE ANALYSIS] AT SER-289 AND SER-552</scope>
    <scope>IDENTIFICATION BY MASS SPECTROMETRY [LARGE SCALE ANALYSIS]</scope>
</reference>
<reference key="8">
    <citation type="journal article" date="2009" name="Mol. Cell. Proteomics">
        <title>Large scale localization of protein phosphorylation by use of electron capture dissociation mass spectrometry.</title>
        <authorList>
            <person name="Sweet S.M."/>
            <person name="Bailey C.M."/>
            <person name="Cunningham D.L."/>
            <person name="Heath J.K."/>
            <person name="Cooper H.J."/>
        </authorList>
    </citation>
    <scope>PHOSPHORYLATION [LARGE SCALE ANALYSIS] AT SER-999</scope>
    <scope>IDENTIFICATION BY MASS SPECTROMETRY [LARGE SCALE ANALYSIS]</scope>
    <source>
        <tissue>Embryonic fibroblast</tissue>
    </source>
</reference>
<reference key="9">
    <citation type="journal article" date="2010" name="Cell">
        <title>A tissue-specific atlas of mouse protein phosphorylation and expression.</title>
        <authorList>
            <person name="Huttlin E.L."/>
            <person name="Jedrychowski M.P."/>
            <person name="Elias J.E."/>
            <person name="Goswami T."/>
            <person name="Rad R."/>
            <person name="Beausoleil S.A."/>
            <person name="Villen J."/>
            <person name="Haas W."/>
            <person name="Sowa M.E."/>
            <person name="Gygi S.P."/>
        </authorList>
    </citation>
    <scope>PHOSPHORYLATION [LARGE SCALE ANALYSIS] AT SER-289; SER-549; SER-550; SER-552 AND SER-999</scope>
    <scope>IDENTIFICATION BY MASS SPECTROMETRY [LARGE SCALE ANALYSIS]</scope>
    <source>
        <tissue>Brain</tissue>
        <tissue>Brown adipose tissue</tissue>
        <tissue>Heart</tissue>
        <tissue>Kidney</tissue>
        <tissue>Liver</tissue>
        <tissue>Lung</tissue>
        <tissue>Pancreas</tissue>
        <tissue>Spleen</tissue>
        <tissue>Testis</tissue>
    </source>
</reference>
<reference key="10">
    <citation type="journal article" date="2014" name="Mol. Cell. Proteomics">
        <title>Immunoaffinity enrichment and mass spectrometry analysis of protein methylation.</title>
        <authorList>
            <person name="Guo A."/>
            <person name="Gu H."/>
            <person name="Zhou J."/>
            <person name="Mulhern D."/>
            <person name="Wang Y."/>
            <person name="Lee K.A."/>
            <person name="Yang V."/>
            <person name="Aguiar M."/>
            <person name="Kornhauser J."/>
            <person name="Jia X."/>
            <person name="Ren J."/>
            <person name="Beausoleil S.A."/>
            <person name="Silva J.C."/>
            <person name="Vemulapalli V."/>
            <person name="Bedford M.T."/>
            <person name="Comb M.J."/>
        </authorList>
    </citation>
    <scope>METHYLATION [LARGE SCALE ANALYSIS] AT ARG-1014</scope>
    <scope>IDENTIFICATION BY MASS SPECTROMETRY [LARGE SCALE ANALYSIS]</scope>
    <source>
        <tissue>Brain</tissue>
        <tissue>Embryo</tissue>
    </source>
</reference>
<evidence type="ECO:0000250" key="1">
    <source>
        <dbReference type="UniProtKB" id="Q9NWH9"/>
    </source>
</evidence>
<evidence type="ECO:0000255" key="2"/>
<evidence type="ECO:0000255" key="3">
    <source>
        <dbReference type="PROSITE-ProRule" id="PRU00176"/>
    </source>
</evidence>
<evidence type="ECO:0000255" key="4">
    <source>
        <dbReference type="PROSITE-ProRule" id="PRU00186"/>
    </source>
</evidence>
<evidence type="ECO:0000256" key="5">
    <source>
        <dbReference type="SAM" id="MobiDB-lite"/>
    </source>
</evidence>
<evidence type="ECO:0000269" key="6">
    <source>
    </source>
</evidence>
<evidence type="ECO:0000303" key="7">
    <source>
    </source>
</evidence>
<evidence type="ECO:0000305" key="8"/>
<evidence type="ECO:0007744" key="9">
    <source>
    </source>
</evidence>
<evidence type="ECO:0007744" key="10">
    <source>
    </source>
</evidence>
<evidence type="ECO:0007744" key="11">
    <source>
    </source>
</evidence>
<evidence type="ECO:0007744" key="12">
    <source>
    </source>
</evidence>
<evidence type="ECO:0007744" key="13">
    <source>
    </source>
</evidence>
<evidence type="ECO:0007744" key="14">
    <source>
    </source>
</evidence>
<gene>
    <name type="primary">Sltm</name>
    <name type="synonym">Met</name>
</gene>
<name>SLTM_MOUSE</name>
<organism>
    <name type="scientific">Mus musculus</name>
    <name type="common">Mouse</name>
    <dbReference type="NCBI Taxonomy" id="10090"/>
    <lineage>
        <taxon>Eukaryota</taxon>
        <taxon>Metazoa</taxon>
        <taxon>Chordata</taxon>
        <taxon>Craniata</taxon>
        <taxon>Vertebrata</taxon>
        <taxon>Euteleostomi</taxon>
        <taxon>Mammalia</taxon>
        <taxon>Eutheria</taxon>
        <taxon>Euarchontoglires</taxon>
        <taxon>Glires</taxon>
        <taxon>Rodentia</taxon>
        <taxon>Myomorpha</taxon>
        <taxon>Muroidea</taxon>
        <taxon>Muridae</taxon>
        <taxon>Murinae</taxon>
        <taxon>Mus</taxon>
        <taxon>Mus</taxon>
    </lineage>
</organism>
<dbReference type="EMBL" id="AF462146">
    <property type="protein sequence ID" value="AAO15605.1"/>
    <property type="molecule type" value="mRNA"/>
</dbReference>
<dbReference type="EMBL" id="AK017839">
    <property type="protein sequence ID" value="BAB30967.1"/>
    <property type="molecule type" value="mRNA"/>
</dbReference>
<dbReference type="EMBL" id="AK045723">
    <property type="protein sequence ID" value="BAC32471.1"/>
    <property type="status" value="ALT_INIT"/>
    <property type="molecule type" value="mRNA"/>
</dbReference>
<dbReference type="EMBL" id="AK077578">
    <property type="protein sequence ID" value="BAC36873.1"/>
    <property type="molecule type" value="mRNA"/>
</dbReference>
<dbReference type="EMBL" id="AK134756">
    <property type="protein sequence ID" value="BAE22267.1"/>
    <property type="status" value="ALT_INIT"/>
    <property type="molecule type" value="mRNA"/>
</dbReference>
<dbReference type="EMBL" id="BC019992">
    <property type="protein sequence ID" value="AAH19992.1"/>
    <property type="status" value="ALT_INIT"/>
    <property type="molecule type" value="mRNA"/>
</dbReference>
<dbReference type="CCDS" id="CCDS23322.1">
    <molecule id="Q8CH25-1"/>
</dbReference>
<dbReference type="CCDS" id="CCDS90615.1">
    <molecule id="Q8CH25-2"/>
</dbReference>
<dbReference type="RefSeq" id="NP_079966.2">
    <molecule id="Q8CH25-1"/>
    <property type="nucleotide sequence ID" value="NM_025690.4"/>
</dbReference>
<dbReference type="RefSeq" id="NP_080613.1">
    <molecule id="Q8CH25-2"/>
    <property type="nucleotide sequence ID" value="NM_026337.2"/>
</dbReference>
<dbReference type="SMR" id="Q8CH25"/>
<dbReference type="BioGRID" id="211628">
    <property type="interactions" value="4"/>
</dbReference>
<dbReference type="FunCoup" id="Q8CH25">
    <property type="interactions" value="5004"/>
</dbReference>
<dbReference type="IntAct" id="Q8CH25">
    <property type="interactions" value="3"/>
</dbReference>
<dbReference type="MINT" id="Q8CH25"/>
<dbReference type="STRING" id="10090.ENSMUSP00000049112"/>
<dbReference type="GlyGen" id="Q8CH25">
    <property type="glycosylation" value="3 sites, 2 N-linked glycans (2 sites), 1 O-linked glycan (1 site)"/>
</dbReference>
<dbReference type="iPTMnet" id="Q8CH25"/>
<dbReference type="PhosphoSitePlus" id="Q8CH25"/>
<dbReference type="jPOST" id="Q8CH25"/>
<dbReference type="PaxDb" id="10090-ENSMUSP00000049112"/>
<dbReference type="PeptideAtlas" id="Q8CH25"/>
<dbReference type="ProteomicsDB" id="258697">
    <molecule id="Q8CH25-1"/>
</dbReference>
<dbReference type="ProteomicsDB" id="258698">
    <molecule id="Q8CH25-2"/>
</dbReference>
<dbReference type="Pumba" id="Q8CH25"/>
<dbReference type="Antibodypedia" id="25331">
    <property type="antibodies" value="128 antibodies from 20 providers"/>
</dbReference>
<dbReference type="DNASU" id="66660"/>
<dbReference type="Ensembl" id="ENSMUST00000049263.9">
    <molecule id="Q8CH25-1"/>
    <property type="protein sequence ID" value="ENSMUSP00000049112.8"/>
    <property type="gene ID" value="ENSMUSG00000032212.11"/>
</dbReference>
<dbReference type="Ensembl" id="ENSMUST00000216816.2">
    <molecule id="Q8CH25-2"/>
    <property type="protein sequence ID" value="ENSMUSP00000149059.2"/>
    <property type="gene ID" value="ENSMUSG00000032212.11"/>
</dbReference>
<dbReference type="GeneID" id="66660"/>
<dbReference type="KEGG" id="mmu:66660"/>
<dbReference type="UCSC" id="uc009qok.1">
    <molecule id="Q8CH25-2"/>
    <property type="organism name" value="mouse"/>
</dbReference>
<dbReference type="UCSC" id="uc009qol.1">
    <molecule id="Q8CH25-1"/>
    <property type="organism name" value="mouse"/>
</dbReference>
<dbReference type="AGR" id="MGI:1913910"/>
<dbReference type="CTD" id="79811"/>
<dbReference type="MGI" id="MGI:1913910">
    <property type="gene designation" value="Sltm"/>
</dbReference>
<dbReference type="VEuPathDB" id="HostDB:ENSMUSG00000032212"/>
<dbReference type="eggNOG" id="KOG4661">
    <property type="taxonomic scope" value="Eukaryota"/>
</dbReference>
<dbReference type="GeneTree" id="ENSGT00940000156573"/>
<dbReference type="HOGENOM" id="CLU_011145_1_0_1"/>
<dbReference type="InParanoid" id="Q8CH25"/>
<dbReference type="OMA" id="HEEMEGN"/>
<dbReference type="OrthoDB" id="6159259at2759"/>
<dbReference type="PhylomeDB" id="Q8CH25"/>
<dbReference type="TreeFam" id="TF325240"/>
<dbReference type="BioGRID-ORCS" id="66660">
    <property type="hits" value="10 hits in 80 CRISPR screens"/>
</dbReference>
<dbReference type="ChiTaRS" id="Sltm">
    <property type="organism name" value="mouse"/>
</dbReference>
<dbReference type="PRO" id="PR:Q8CH25"/>
<dbReference type="Proteomes" id="UP000000589">
    <property type="component" value="Chromosome 9"/>
</dbReference>
<dbReference type="RNAct" id="Q8CH25">
    <property type="molecule type" value="protein"/>
</dbReference>
<dbReference type="Bgee" id="ENSMUSG00000032212">
    <property type="expression patterns" value="Expressed in undifferentiated genital tubercle and 273 other cell types or tissues"/>
</dbReference>
<dbReference type="ExpressionAtlas" id="Q8CH25">
    <property type="expression patterns" value="baseline and differential"/>
</dbReference>
<dbReference type="GO" id="GO:0016604">
    <property type="term" value="C:nuclear body"/>
    <property type="evidence" value="ECO:0007669"/>
    <property type="project" value="Ensembl"/>
</dbReference>
<dbReference type="GO" id="GO:0003723">
    <property type="term" value="F:RNA binding"/>
    <property type="evidence" value="ECO:0007669"/>
    <property type="project" value="UniProtKB-KW"/>
</dbReference>
<dbReference type="GO" id="GO:0006915">
    <property type="term" value="P:apoptotic process"/>
    <property type="evidence" value="ECO:0007669"/>
    <property type="project" value="UniProtKB-KW"/>
</dbReference>
<dbReference type="CDD" id="cd12678">
    <property type="entry name" value="RRM_SLTM"/>
    <property type="match status" value="1"/>
</dbReference>
<dbReference type="FunFam" id="1.10.720.30:FF:000010">
    <property type="entry name" value="SAFB-like transcription modulator isoform X2"/>
    <property type="match status" value="1"/>
</dbReference>
<dbReference type="FunFam" id="3.30.70.330:FF:000238">
    <property type="entry name" value="SAFB-like transcription modulator isoform X2"/>
    <property type="match status" value="1"/>
</dbReference>
<dbReference type="Gene3D" id="3.30.70.330">
    <property type="match status" value="1"/>
</dbReference>
<dbReference type="Gene3D" id="1.10.720.30">
    <property type="entry name" value="SAP domain"/>
    <property type="match status" value="1"/>
</dbReference>
<dbReference type="InterPro" id="IPR012677">
    <property type="entry name" value="Nucleotide-bd_a/b_plait_sf"/>
</dbReference>
<dbReference type="InterPro" id="IPR035979">
    <property type="entry name" value="RBD_domain_sf"/>
</dbReference>
<dbReference type="InterPro" id="IPR000504">
    <property type="entry name" value="RRM_dom"/>
</dbReference>
<dbReference type="InterPro" id="IPR051738">
    <property type="entry name" value="SAF_Modulators"/>
</dbReference>
<dbReference type="InterPro" id="IPR003034">
    <property type="entry name" value="SAP_dom"/>
</dbReference>
<dbReference type="InterPro" id="IPR036361">
    <property type="entry name" value="SAP_dom_sf"/>
</dbReference>
<dbReference type="PANTHER" id="PTHR15683:SF5">
    <property type="entry name" value="SAFB-LIKE TRANSCRIPTION MODULATOR"/>
    <property type="match status" value="1"/>
</dbReference>
<dbReference type="PANTHER" id="PTHR15683">
    <property type="entry name" value="SCAFFOLD ATTACHMENT FACTOR B-RELATED"/>
    <property type="match status" value="1"/>
</dbReference>
<dbReference type="Pfam" id="PF00076">
    <property type="entry name" value="RRM_1"/>
    <property type="match status" value="1"/>
</dbReference>
<dbReference type="Pfam" id="PF02037">
    <property type="entry name" value="SAP"/>
    <property type="match status" value="1"/>
</dbReference>
<dbReference type="SMART" id="SM00360">
    <property type="entry name" value="RRM"/>
    <property type="match status" value="1"/>
</dbReference>
<dbReference type="SMART" id="SM00513">
    <property type="entry name" value="SAP"/>
    <property type="match status" value="1"/>
</dbReference>
<dbReference type="SUPFAM" id="SSF54928">
    <property type="entry name" value="RNA-binding domain, RBD"/>
    <property type="match status" value="1"/>
</dbReference>
<dbReference type="SUPFAM" id="SSF68906">
    <property type="entry name" value="SAP domain"/>
    <property type="match status" value="1"/>
</dbReference>
<dbReference type="PROSITE" id="PS50102">
    <property type="entry name" value="RRM"/>
    <property type="match status" value="1"/>
</dbReference>
<dbReference type="PROSITE" id="PS50800">
    <property type="entry name" value="SAP"/>
    <property type="match status" value="1"/>
</dbReference>
<sequence>MAAAAGAVVASAASGPAEGKKITELRVIDLRSELKRRNLDINGVKTVLVSRLKQAIEEEGGDPDNIELTVSTDTPNKKPTKGKGKKQEADELSGDASVEDDSFVKDCELENQETHDQDGNEELKDLEEFGENEEEIVHSQELLSTEENKTTQEFVEAEAIEDREKEDIESQETEAQEGEDDTFLTAQDGEEEENEKDIAGSGDGTQEVSKPLPSEGSLAEADHTAHEEMEANATGKEAEDDNISVTIQAEDAITLDFDGDDLLETGKNVKITDSEASKPKDVQDAIAQSPEKEAKDYEMNPNHKDGKKEDSVKGEPVEKEARESAKKAESGDKEKDTLKKGPSSTGASGQAKSSSKESKDSKTSSKDDKGSTGSAGGSSGSSTKNIWVSGLSSNTKAADLKNLFGKYGKVLSAKVVTNARSPGAKCYGIVTMSSSTEVSRCVAHLHRTELHGQLISVEKVKGDPSKKEMKKENDEKSSSRSAGDKKNASDRSAKTQASIKKEEKRSSEKSEKKESKDTKKIEKDEKNDDGPSGQTSESLKKSEEKKRISSKSPGHMVILNQTKGDHCRPSRRGRYEKGHGRSKEKERASLDKKRDKDYRRKEILPFEKMKEQRLREHLVRFERLKQAVEFRRRKEIAERERRERERIRIIREREERERLQRERERLEIERQKLERERMERERLERERIRIEQERRREAERIAREREELRRQQQQLRYEQEKRNSLKRPRDVDHRRDDPYWSENKKLSLDTEARFGHGSDYRQQSRFLDFSHRERARFPDTASVQSSFERRERFVGQSEGKKPRPAARREEPSFERYPKNFSDSRRNEPPPPRNELRETDRREVRGERDERRTVILHDRPEVAHPRHPRETVPNPSRPTSWKSEANMSTEKRESRVERPERSGREVSGHTVRGAPPGNRSSASGYGTREGERGVIADRGSGTQHYPEERHVVERHGRDTSGPRKEWHGPPSQGPSYHDTRRMGDGRAGAGMITQHSSTASPVNRIVQMSGNSLPRGSSSGFKPFKSGPPRRF</sequence>